<evidence type="ECO:0000255" key="1">
    <source>
        <dbReference type="HAMAP-Rule" id="MF_00056"/>
    </source>
</evidence>
<dbReference type="EC" id="2.5.1.55" evidence="1"/>
<dbReference type="EMBL" id="CU928162">
    <property type="protein sequence ID" value="CAR07563.1"/>
    <property type="molecule type" value="Genomic_DNA"/>
</dbReference>
<dbReference type="RefSeq" id="WP_000811065.1">
    <property type="nucleotide sequence ID" value="NC_011745.1"/>
</dbReference>
<dbReference type="SMR" id="B7MTZ9"/>
<dbReference type="GeneID" id="75203328"/>
<dbReference type="KEGG" id="ecq:ECED1_1363"/>
<dbReference type="HOGENOM" id="CLU_036666_0_0_6"/>
<dbReference type="UniPathway" id="UPA00030"/>
<dbReference type="UniPathway" id="UPA00357">
    <property type="reaction ID" value="UER00474"/>
</dbReference>
<dbReference type="Proteomes" id="UP000000748">
    <property type="component" value="Chromosome"/>
</dbReference>
<dbReference type="GO" id="GO:0005737">
    <property type="term" value="C:cytoplasm"/>
    <property type="evidence" value="ECO:0007669"/>
    <property type="project" value="UniProtKB-SubCell"/>
</dbReference>
<dbReference type="GO" id="GO:0008676">
    <property type="term" value="F:3-deoxy-8-phosphooctulonate synthase activity"/>
    <property type="evidence" value="ECO:0007669"/>
    <property type="project" value="UniProtKB-UniRule"/>
</dbReference>
<dbReference type="GO" id="GO:0019294">
    <property type="term" value="P:keto-3-deoxy-D-manno-octulosonic acid biosynthetic process"/>
    <property type="evidence" value="ECO:0007669"/>
    <property type="project" value="UniProtKB-UniRule"/>
</dbReference>
<dbReference type="FunFam" id="3.20.20.70:FF:000058">
    <property type="entry name" value="2-dehydro-3-deoxyphosphooctonate aldolase"/>
    <property type="match status" value="1"/>
</dbReference>
<dbReference type="Gene3D" id="3.20.20.70">
    <property type="entry name" value="Aldolase class I"/>
    <property type="match status" value="1"/>
</dbReference>
<dbReference type="HAMAP" id="MF_00056">
    <property type="entry name" value="KDO8P_synth"/>
    <property type="match status" value="1"/>
</dbReference>
<dbReference type="InterPro" id="IPR013785">
    <property type="entry name" value="Aldolase_TIM"/>
</dbReference>
<dbReference type="InterPro" id="IPR006218">
    <property type="entry name" value="DAHP1/KDSA"/>
</dbReference>
<dbReference type="InterPro" id="IPR006269">
    <property type="entry name" value="KDO8P_synthase"/>
</dbReference>
<dbReference type="NCBIfam" id="TIGR01362">
    <property type="entry name" value="KDO8P_synth"/>
    <property type="match status" value="1"/>
</dbReference>
<dbReference type="NCBIfam" id="NF003543">
    <property type="entry name" value="PRK05198.1"/>
    <property type="match status" value="1"/>
</dbReference>
<dbReference type="NCBIfam" id="NF009109">
    <property type="entry name" value="PRK12457.1"/>
    <property type="match status" value="1"/>
</dbReference>
<dbReference type="PANTHER" id="PTHR21057">
    <property type="entry name" value="PHOSPHO-2-DEHYDRO-3-DEOXYHEPTONATE ALDOLASE"/>
    <property type="match status" value="1"/>
</dbReference>
<dbReference type="Pfam" id="PF00793">
    <property type="entry name" value="DAHP_synth_1"/>
    <property type="match status" value="1"/>
</dbReference>
<dbReference type="SUPFAM" id="SSF51569">
    <property type="entry name" value="Aldolase"/>
    <property type="match status" value="1"/>
</dbReference>
<accession>B7MTZ9</accession>
<keyword id="KW-0963">Cytoplasm</keyword>
<keyword id="KW-0448">Lipopolysaccharide biosynthesis</keyword>
<keyword id="KW-0808">Transferase</keyword>
<feature type="chain" id="PRO_1000117778" description="2-dehydro-3-deoxyphosphooctonate aldolase">
    <location>
        <begin position="1"/>
        <end position="284"/>
    </location>
</feature>
<proteinExistence type="inferred from homology"/>
<sequence>MKQKVVSIGDINVANDLPFVLFGGMNVLESRDLAMRICEHYVTVTQKLGIPYVFKASFDKANRSSIHSYRGPGLEEGMKIFQELKQTFGVKIITDVHEPSQAQPVADVVDVIQLPAFLARQTDLVEAMAKTGAVINVKKPQFVSPGQMGNIVDKFKEGGNEKVILCDRGANFGYDNLVVDMLGFSIMKKVSGNSPVIFDVTHALQCRDPFGAASGGRRAQVAELARAGMAVGLAGLFIEAHPDPEHAKCDGPSALPLAKLEPFLKQMKAIDDLVKGFEELDTSK</sequence>
<gene>
    <name evidence="1" type="primary">kdsA</name>
    <name type="ordered locus">ECED1_1363</name>
</gene>
<organism>
    <name type="scientific">Escherichia coli O81 (strain ED1a)</name>
    <dbReference type="NCBI Taxonomy" id="585397"/>
    <lineage>
        <taxon>Bacteria</taxon>
        <taxon>Pseudomonadati</taxon>
        <taxon>Pseudomonadota</taxon>
        <taxon>Gammaproteobacteria</taxon>
        <taxon>Enterobacterales</taxon>
        <taxon>Enterobacteriaceae</taxon>
        <taxon>Escherichia</taxon>
    </lineage>
</organism>
<reference key="1">
    <citation type="journal article" date="2009" name="PLoS Genet.">
        <title>Organised genome dynamics in the Escherichia coli species results in highly diverse adaptive paths.</title>
        <authorList>
            <person name="Touchon M."/>
            <person name="Hoede C."/>
            <person name="Tenaillon O."/>
            <person name="Barbe V."/>
            <person name="Baeriswyl S."/>
            <person name="Bidet P."/>
            <person name="Bingen E."/>
            <person name="Bonacorsi S."/>
            <person name="Bouchier C."/>
            <person name="Bouvet O."/>
            <person name="Calteau A."/>
            <person name="Chiapello H."/>
            <person name="Clermont O."/>
            <person name="Cruveiller S."/>
            <person name="Danchin A."/>
            <person name="Diard M."/>
            <person name="Dossat C."/>
            <person name="Karoui M.E."/>
            <person name="Frapy E."/>
            <person name="Garry L."/>
            <person name="Ghigo J.M."/>
            <person name="Gilles A.M."/>
            <person name="Johnson J."/>
            <person name="Le Bouguenec C."/>
            <person name="Lescat M."/>
            <person name="Mangenot S."/>
            <person name="Martinez-Jehanne V."/>
            <person name="Matic I."/>
            <person name="Nassif X."/>
            <person name="Oztas S."/>
            <person name="Petit M.A."/>
            <person name="Pichon C."/>
            <person name="Rouy Z."/>
            <person name="Ruf C.S."/>
            <person name="Schneider D."/>
            <person name="Tourret J."/>
            <person name="Vacherie B."/>
            <person name="Vallenet D."/>
            <person name="Medigue C."/>
            <person name="Rocha E.P.C."/>
            <person name="Denamur E."/>
        </authorList>
    </citation>
    <scope>NUCLEOTIDE SEQUENCE [LARGE SCALE GENOMIC DNA]</scope>
    <source>
        <strain>ED1a</strain>
    </source>
</reference>
<comment type="catalytic activity">
    <reaction evidence="1">
        <text>D-arabinose 5-phosphate + phosphoenolpyruvate + H2O = 3-deoxy-alpha-D-manno-2-octulosonate-8-phosphate + phosphate</text>
        <dbReference type="Rhea" id="RHEA:14053"/>
        <dbReference type="ChEBI" id="CHEBI:15377"/>
        <dbReference type="ChEBI" id="CHEBI:43474"/>
        <dbReference type="ChEBI" id="CHEBI:57693"/>
        <dbReference type="ChEBI" id="CHEBI:58702"/>
        <dbReference type="ChEBI" id="CHEBI:85985"/>
        <dbReference type="EC" id="2.5.1.55"/>
    </reaction>
</comment>
<comment type="pathway">
    <text evidence="1">Carbohydrate biosynthesis; 3-deoxy-D-manno-octulosonate biosynthesis; 3-deoxy-D-manno-octulosonate from D-ribulose 5-phosphate: step 2/3.</text>
</comment>
<comment type="pathway">
    <text evidence="1">Bacterial outer membrane biogenesis; lipopolysaccharide biosynthesis.</text>
</comment>
<comment type="subcellular location">
    <subcellularLocation>
        <location evidence="1">Cytoplasm</location>
    </subcellularLocation>
</comment>
<comment type="similarity">
    <text evidence="1">Belongs to the KdsA family.</text>
</comment>
<protein>
    <recommendedName>
        <fullName evidence="1">2-dehydro-3-deoxyphosphooctonate aldolase</fullName>
        <ecNumber evidence="1">2.5.1.55</ecNumber>
    </recommendedName>
    <alternativeName>
        <fullName evidence="1">3-deoxy-D-manno-octulosonic acid 8-phosphate synthase</fullName>
    </alternativeName>
    <alternativeName>
        <fullName evidence="1">KDO-8-phosphate synthase</fullName>
        <shortName evidence="1">KDO 8-P synthase</shortName>
        <shortName evidence="1">KDOPS</shortName>
    </alternativeName>
    <alternativeName>
        <fullName evidence="1">Phospho-2-dehydro-3-deoxyoctonate aldolase</fullName>
    </alternativeName>
</protein>
<name>KDSA_ECO81</name>